<evidence type="ECO:0000250" key="1"/>
<evidence type="ECO:0000250" key="2">
    <source>
        <dbReference type="UniProtKB" id="D3ZYW7"/>
    </source>
</evidence>
<evidence type="ECO:0000250" key="3">
    <source>
        <dbReference type="UniProtKB" id="Q16595"/>
    </source>
</evidence>
<evidence type="ECO:0000250" key="4">
    <source>
        <dbReference type="UniProtKB" id="Q9H1K1"/>
    </source>
</evidence>
<evidence type="ECO:0000269" key="5">
    <source>
    </source>
</evidence>
<evidence type="ECO:0000269" key="6">
    <source>
    </source>
</evidence>
<evidence type="ECO:0000269" key="7">
    <source>
    </source>
</evidence>
<evidence type="ECO:0000269" key="8">
    <source>
    </source>
</evidence>
<evidence type="ECO:0000269" key="9">
    <source>
    </source>
</evidence>
<evidence type="ECO:0000269" key="10">
    <source>
    </source>
</evidence>
<evidence type="ECO:0000269" key="11">
    <source>
    </source>
</evidence>
<evidence type="ECO:0000303" key="12">
    <source>
    </source>
</evidence>
<evidence type="ECO:0000305" key="13"/>
<evidence type="ECO:0000312" key="14">
    <source>
        <dbReference type="MGI" id="MGI:1096879"/>
    </source>
</evidence>
<keyword id="KW-0963">Cytoplasm</keyword>
<keyword id="KW-0350">Heme biosynthesis</keyword>
<keyword id="KW-0406">Ion transport</keyword>
<keyword id="KW-0408">Iron</keyword>
<keyword id="KW-0409">Iron storage</keyword>
<keyword id="KW-0410">Iron transport</keyword>
<keyword id="KW-0479">Metal-binding</keyword>
<keyword id="KW-0496">Mitochondrion</keyword>
<keyword id="KW-0560">Oxidoreductase</keyword>
<keyword id="KW-1185">Reference proteome</keyword>
<keyword id="KW-0809">Transit peptide</keyword>
<keyword id="KW-0813">Transport</keyword>
<sequence length="207" mass="22924">MWAFGGRAAVGLLPRTASRASAWVGNPRWREPIVTCGRRGLHVTVNAGATRHAHLNLHYLQILNIKKQSVCVVHLRNLGTLDNPSSLDETAYERLAEETLDSLAEFFEDLADKPYTLEDYDVSFGDGVLTIKLGGDLGTYVINKQTPNKQIWLSSPSSGPKRYDWTGKNWVYSHDGVSLHELLARELTKALNTKLDLSSLAYSGKGT</sequence>
<name>FRDA_MOUSE</name>
<reference key="1">
    <citation type="journal article" date="1997" name="Nat. Genet.">
        <title>Studies of human, mouse and yeast homologues indicate a mitochondrial function for frataxin.</title>
        <authorList>
            <person name="Koutnikova H."/>
            <person name="Campuzano V."/>
            <person name="Foury F."/>
            <person name="Dolle P."/>
            <person name="Cazzalini O."/>
            <person name="Koenig M."/>
        </authorList>
    </citation>
    <scope>NUCLEOTIDE SEQUENCE [MRNA]</scope>
    <scope>SUBCELLULAR LOCATION</scope>
    <scope>TISSUE SPECIFICITY</scope>
    <scope>DEVELOPMENTAL STAGE</scope>
    <source>
        <tissue>Embryo</tissue>
    </source>
</reference>
<reference key="2">
    <citation type="journal article" date="2002" name="Hum. Mol. Genet.">
        <title>Assembly and iron-binding properties of human frataxin, the protein deficient in Friedreich ataxia.</title>
        <authorList>
            <person name="Cavadini P."/>
            <person name="O'Neill H.A."/>
            <person name="Benada O."/>
            <person name="Isaya G."/>
        </authorList>
    </citation>
    <scope>SUBUNIT</scope>
</reference>
<reference key="3">
    <citation type="journal article" date="2007" name="Hum. Mol. Genet.">
        <title>Frataxin is essential for extramitochondrial Fe-S cluster proteins in mammalian tissues.</title>
        <authorList>
            <person name="Martelli A."/>
            <person name="Wattenhofer-Donze M."/>
            <person name="Schmucker S."/>
            <person name="Bouvet S."/>
            <person name="Reutenauer L."/>
            <person name="Puccio H."/>
        </authorList>
    </citation>
    <scope>SUBCELLULAR LOCATION</scope>
</reference>
<reference key="4">
    <citation type="journal article" date="2008" name="Hum. Mol. Genet.">
        <title>The in vivo mitochondrial two-step maturation of human frataxin.</title>
        <authorList>
            <person name="Schmucker S."/>
            <person name="Argentini M."/>
            <person name="Carelle-Calmels N."/>
            <person name="Martelli A."/>
            <person name="Puccio H."/>
        </authorList>
    </citation>
    <scope>PROTEOLYTIC PROCESSING</scope>
</reference>
<reference key="5">
    <citation type="journal article" date="2009" name="PLoS ONE">
        <title>The first cellular models based on frataxin missense mutations that reproduce spontaneously the defects associated with Friedreich ataxia.</title>
        <authorList>
            <person name="Calmels N."/>
            <person name="Schmucker S."/>
            <person name="Wattenhofer-Donze M."/>
            <person name="Martelli A."/>
            <person name="Vaucamps N."/>
            <person name="Reutenauer L."/>
            <person name="Messaddeq N."/>
            <person name="Bouton C."/>
            <person name="Koenig M."/>
            <person name="Puccio H."/>
        </authorList>
    </citation>
    <scope>DISRUPTION PHENOTYPE</scope>
</reference>
<reference key="6">
    <citation type="journal article" date="2009" name="Proc. Natl. Acad. Sci. U.S.A.">
        <title>Elucidation of the mechanism of mitochondrial iron loading in Friedreich's ataxia by analysis of a mouse mutant.</title>
        <authorList>
            <person name="Huang M.L."/>
            <person name="Becker E.M."/>
            <person name="Whitnall M."/>
            <person name="Rahmanto Y.S."/>
            <person name="Ponka P."/>
            <person name="Richardson D.R."/>
        </authorList>
    </citation>
    <scope>FUNCTION</scope>
</reference>
<reference key="7">
    <citation type="journal article" date="2010" name="Cell">
        <title>A tissue-specific atlas of mouse protein phosphorylation and expression.</title>
        <authorList>
            <person name="Huttlin E.L."/>
            <person name="Jedrychowski M.P."/>
            <person name="Elias J.E."/>
            <person name="Goswami T."/>
            <person name="Rad R."/>
            <person name="Beausoleil S.A."/>
            <person name="Villen J."/>
            <person name="Haas W."/>
            <person name="Sowa M.E."/>
            <person name="Gygi S.P."/>
        </authorList>
    </citation>
    <scope>IDENTIFICATION BY MASS SPECTROMETRY [LARGE SCALE ANALYSIS]</scope>
    <source>
        <tissue>Brain</tissue>
        <tissue>Brown adipose tissue</tissue>
        <tissue>Heart</tissue>
        <tissue>Kidney</tissue>
        <tissue>Liver</tissue>
        <tissue>Pancreas</tissue>
        <tissue>Spleen</tissue>
        <tissue>Testis</tissue>
    </source>
</reference>
<reference key="8">
    <citation type="journal article" date="2011" name="PLoS ONE">
        <title>Mammalian frataxin: an essential function for cellular viability through an interaction with a preformed ISCU/NFS1/ISD11 iron-sulfur assembly complex.</title>
        <authorList>
            <person name="Schmucker S."/>
            <person name="Martelli A."/>
            <person name="Colin F."/>
            <person name="Page A."/>
            <person name="Wattenhofer-Donze M."/>
            <person name="Reutenauer L."/>
            <person name="Puccio H."/>
        </authorList>
    </citation>
    <scope>SUBUNIT</scope>
</reference>
<reference key="9">
    <citation type="journal article" date="2015" name="Nat. Commun.">
        <title>Mammalian frataxin directly enhances sulfur transfer of NFS1 persulfide to both ISCU and free thiols.</title>
        <authorList>
            <person name="Parent A."/>
            <person name="Elduque X."/>
            <person name="Cornu D."/>
            <person name="Belot L."/>
            <person name="Le Caer J.P."/>
            <person name="Grandas A."/>
            <person name="Toledano M.B."/>
            <person name="D'Autreaux B."/>
        </authorList>
    </citation>
    <scope>FUNCTION</scope>
    <scope>COMPONENT OF CORE (FE-S) CLUSTER ASSEMBLY COMPLEX</scope>
</reference>
<gene>
    <name evidence="14" type="primary">Fxn</name>
    <name type="synonym">Frda</name>
</gene>
<comment type="function">
    <molecule>Frataxin mature form</molecule>
    <text evidence="3 4 8 10">Functions as an activator of persulfide transfer to the scaffoding protein ISCU as component of the core iron-sulfur cluster (ISC) assembly complex and participates to the [2Fe-2S] cluster assembly (PubMed:19805308, PubMed:25597503). Accelerates sulfur transfer from NFS1 persulfide intermediate to ISCU and to small thiols such as L-cysteine and glutathione leading to persulfuration of these thiols and ultimately sulfide release (PubMed:25597503). Binds ferrous ion and is released from FXN upon the addition of both L-cysteine and reduced FDX2 during [2Fe-2S] cluster assembly (By similarity). The core iron-sulfur cluster (ISC) assembly complex is involved in the de novo synthesis of a [2Fe-2S] cluster, the first step of the mitochondrial iron-sulfur protein biogenesis. This process is initiated by the cysteine desulfurase complex (NFS1:LYRM4:NDUFAB1) that produces persulfide which is delivered on the scaffold protein ISCU in a FXN-dependent manner. Then this complex is stabilized by FDX2 which provides reducing equivalents to accomplish the [2Fe-2S] cluster assembly. Finally, the [2Fe-2S] cluster is transferred from ISCU to chaperone proteins, including HSCB, HSPA9 and GLRX5 (By similarity). May play a role in the protection against iron-catalyzed oxidative stress through its ability to catalyze the oxidation of Fe(2+) to Fe(3+); the oligomeric form but not the monomeric form has in vitro ferroxidase activity. May be able to store large amounts of iron in the form of a ferrihydrite mineral by oligomerization; however, the physiological relevance is unsure as reports are conflicting and the function has only been shown using heterologous overexpression systems. May function as an iron chaperone protein that protects the aconitase [4Fe-4S]2+ cluster from disassembly and promotes enzyme reactivation. May play a role as a high affinity iron binding partner for FECH that is capable of both delivering iron to ferrochelatase and mediating the terminal step in mitochondrial heme biosynthesis (By similarity).</text>
</comment>
<comment type="function">
    <molecule>Extramitochondrial frataxin</molecule>
    <text evidence="3">Modulates the RNA-binding activity of ACO1. May be involved in the cytoplasmic iron-sulfur protein biogenesis. May contribute to oxidative stress resistance and overall cell survival.</text>
</comment>
<comment type="catalytic activity">
    <molecule>Frataxin mature form</molecule>
    <reaction evidence="3">
        <text>4 Fe(2+) + O2 + 4 H(+) = 4 Fe(3+) + 2 H2O</text>
        <dbReference type="Rhea" id="RHEA:11148"/>
        <dbReference type="ChEBI" id="CHEBI:15377"/>
        <dbReference type="ChEBI" id="CHEBI:15378"/>
        <dbReference type="ChEBI" id="CHEBI:15379"/>
        <dbReference type="ChEBI" id="CHEBI:29033"/>
        <dbReference type="ChEBI" id="CHEBI:29034"/>
        <dbReference type="EC" id="1.16.3.1"/>
    </reaction>
</comment>
<comment type="subunit">
    <molecule>Frataxin mature form</molecule>
    <text evidence="2 3 5 9 10">Component of the mitochondrial core iron-sulfur cluster (ISC) complex composed of NFS1, LYRM4, NDUFAB1, ISCU, FXN, and FDX2; this complex is a heterohexamer containing two copies of each monomer (By similarity). Homodimer. Monomer (probable predominant form). Oligomer (PubMed:11823441). Monomers and polymeric aggregates of &gt;1 MDa have been isolated from mitochondria. A small fraction of heterologous overexpressed recombinant frataxin forms high-molecular weight aggregates that incorporate iron. Interacts with LYRM4. Interacts (via ferrous form) with ISCU; the interaction is possible when both are bound to the dimeric form of the cysteine desulfurase complex (NFS1:LYRM4) and the interaction enhances FXN interaction to the dimeric form of the cysteine desulfurase complex (NFS1:LYRM4) (By similarity). Interacts with FECH; one iron-bound FXN monomer seems to interact with a FECH homodimer. Interacts with SDHA and SDHB (By similarity). Interacts with ACO2; the interaction is dependent on citrate (By similarity). Interacts with HSPA9 (By similarity). Component of a complex composed of FXN, NFS1, LYRM4 and ISCU (PubMed:21298097, PubMed:25597503).</text>
</comment>
<comment type="subunit">
    <molecule>Extramitochondrial frataxin</molecule>
    <text evidence="3">Interacts with ACO1. Interacts with ISCU (cytoplasmic form).</text>
</comment>
<comment type="subcellular location">
    <molecule>Frataxin mature form</molecule>
    <subcellularLocation>
        <location evidence="6 11">Mitochondrion</location>
    </subcellularLocation>
</comment>
<comment type="subcellular location">
    <molecule>Extramitochondrial frataxin</molecule>
    <subcellularLocation>
        <location evidence="3">Cytoplasm</location>
        <location evidence="3">Cytosol</location>
    </subcellularLocation>
</comment>
<comment type="tissue specificity">
    <text evidence="11">Heart, liver, skeletal muscle, kidney, spleen and thymus. Weakly expressed in the brain and lung.</text>
</comment>
<comment type="developmental stage">
    <text evidence="11">Expression in the ventricular zone which corresponds to dividing neuronal precursors begins at day 12.5, increases during embryonic development and persists at postnatal day 7 (P7) in the ependymal layer, which is the remnant of the ventricular zone. Weak expression seen in the spinal cord and medulla oblongata, starting at 14.5 dpc and expression also observed in dorsal root ganglia, starting at 14.5 dpc. At P14, expression in the dorsal root ganglia is restricted to the cortical region where the sensory neuron cell bodies are located. In non-neural tissues strong expression seen in the developing liver from 10.5 dpc. Expression detected in the heart and in the cortex of the developing kidney at 12.5 dpc and later. Very high expression observed in the brown adipose tissue. Expression seen in small islands around the neck and back at 14.5 dpc, then in large masses at 16.5 dpc and 18.5 dpc and at P14 is absent in brown adipose tissue. Expression also seen in the thymus and developing gut at 14.5 dpc and until postnatal life. At P14, expression in thymus is restricted to the proliferating cells in the cortical zone and is also prominent in the spleen. Found in the lung at 14.5 dpc.</text>
</comment>
<comment type="PTM">
    <molecule>Frataxin mature form</molecule>
    <text evidence="3">Processed in two steps by mitochondrial processing peptidase (MPP). MPP first cleaves the precursor to intermediate form and subsequently converts the intermediate to yield frataxin mature form (frataxin(81-210)) which is the predominant form. The additional forms, frataxin(56-210) and frataxin(78-210), seem to be produced when the normal maturation process is impaired; their physiological relevance is unsure.</text>
</comment>
<comment type="disruption phenotype">
    <text evidence="7">Loss of cell division and lethal in fibroblasts.</text>
</comment>
<comment type="similarity">
    <text evidence="13">Belongs to the frataxin family.</text>
</comment>
<organism>
    <name type="scientific">Mus musculus</name>
    <name type="common">Mouse</name>
    <dbReference type="NCBI Taxonomy" id="10090"/>
    <lineage>
        <taxon>Eukaryota</taxon>
        <taxon>Metazoa</taxon>
        <taxon>Chordata</taxon>
        <taxon>Craniata</taxon>
        <taxon>Vertebrata</taxon>
        <taxon>Euteleostomi</taxon>
        <taxon>Mammalia</taxon>
        <taxon>Eutheria</taxon>
        <taxon>Euarchontoglires</taxon>
        <taxon>Glires</taxon>
        <taxon>Rodentia</taxon>
        <taxon>Myomorpha</taxon>
        <taxon>Muroidea</taxon>
        <taxon>Muridae</taxon>
        <taxon>Murinae</taxon>
        <taxon>Mus</taxon>
        <taxon>Mus</taxon>
    </lineage>
</organism>
<accession>O35943</accession>
<dbReference type="EC" id="1.16.3.1" evidence="3"/>
<dbReference type="EMBL" id="U95736">
    <property type="protein sequence ID" value="AAB67778.1"/>
    <property type="molecule type" value="mRNA"/>
</dbReference>
<dbReference type="CCDS" id="CCDS29711.1"/>
<dbReference type="RefSeq" id="NP_032070.1">
    <property type="nucleotide sequence ID" value="NM_008044.3"/>
</dbReference>
<dbReference type="SMR" id="O35943"/>
<dbReference type="BioGRID" id="199741">
    <property type="interactions" value="5"/>
</dbReference>
<dbReference type="ComplexPortal" id="CPX-5823">
    <property type="entry name" value="Mitochondrial NIAUFX iron-sulfur cluster assembly complex"/>
</dbReference>
<dbReference type="FunCoup" id="O35943">
    <property type="interactions" value="1358"/>
</dbReference>
<dbReference type="STRING" id="10090.ENSMUSP00000080081"/>
<dbReference type="iPTMnet" id="O35943"/>
<dbReference type="PhosphoSitePlus" id="O35943"/>
<dbReference type="jPOST" id="O35943"/>
<dbReference type="PaxDb" id="10090-ENSMUSP00000080081"/>
<dbReference type="PeptideAtlas" id="O35943"/>
<dbReference type="ProteomicsDB" id="267517"/>
<dbReference type="Pumba" id="O35943"/>
<dbReference type="ABCD" id="O35943">
    <property type="antibodies" value="1 sequenced antibody"/>
</dbReference>
<dbReference type="Antibodypedia" id="26793">
    <property type="antibodies" value="657 antibodies from 35 providers"/>
</dbReference>
<dbReference type="DNASU" id="14297"/>
<dbReference type="Ensembl" id="ENSMUST00000081333.11">
    <property type="protein sequence ID" value="ENSMUSP00000080081.5"/>
    <property type="gene ID" value="ENSMUSG00000059363.11"/>
</dbReference>
<dbReference type="GeneID" id="14297"/>
<dbReference type="KEGG" id="mmu:14297"/>
<dbReference type="UCSC" id="uc008hao.1">
    <property type="organism name" value="mouse"/>
</dbReference>
<dbReference type="AGR" id="MGI:1096879"/>
<dbReference type="CTD" id="2395"/>
<dbReference type="MGI" id="MGI:1096879">
    <property type="gene designation" value="Fxn"/>
</dbReference>
<dbReference type="VEuPathDB" id="HostDB:ENSMUSG00000059363"/>
<dbReference type="eggNOG" id="KOG3413">
    <property type="taxonomic scope" value="Eukaryota"/>
</dbReference>
<dbReference type="GeneTree" id="ENSGT00390000005811"/>
<dbReference type="HOGENOM" id="CLU_080880_1_0_1"/>
<dbReference type="InParanoid" id="O35943"/>
<dbReference type="OMA" id="QSVHLMN"/>
<dbReference type="OrthoDB" id="1897642at2759"/>
<dbReference type="PhylomeDB" id="O35943"/>
<dbReference type="TreeFam" id="TF318958"/>
<dbReference type="Reactome" id="R-MMU-1268020">
    <property type="pathway name" value="Mitochondrial protein import"/>
</dbReference>
<dbReference type="Reactome" id="R-MMU-1362409">
    <property type="pathway name" value="Mitochondrial iron-sulfur cluster biogenesis"/>
</dbReference>
<dbReference type="Reactome" id="R-MMU-9854311">
    <property type="pathway name" value="Maturation of TCA enzymes and regulation of TCA cycle"/>
</dbReference>
<dbReference type="Reactome" id="R-MMU-9865881">
    <property type="pathway name" value="Complex III assembly"/>
</dbReference>
<dbReference type="BioGRID-ORCS" id="14297">
    <property type="hits" value="26 hits in 77 CRISPR screens"/>
</dbReference>
<dbReference type="ChiTaRS" id="Fxn">
    <property type="organism name" value="mouse"/>
</dbReference>
<dbReference type="PRO" id="PR:O35943"/>
<dbReference type="Proteomes" id="UP000000589">
    <property type="component" value="Chromosome 19"/>
</dbReference>
<dbReference type="RNAct" id="O35943">
    <property type="molecule type" value="protein"/>
</dbReference>
<dbReference type="Bgee" id="ENSMUSG00000059363">
    <property type="expression patterns" value="Expressed in bone marrow and 132 other cell types or tissues"/>
</dbReference>
<dbReference type="ExpressionAtlas" id="O35943">
    <property type="expression patterns" value="baseline and differential"/>
</dbReference>
<dbReference type="GO" id="GO:1990229">
    <property type="term" value="C:iron-sulfur cluster assembly complex"/>
    <property type="evidence" value="ECO:0000303"/>
    <property type="project" value="ComplexPortal"/>
</dbReference>
<dbReference type="GO" id="GO:0099128">
    <property type="term" value="C:mitochondrial [2Fe-2S] assembly complex"/>
    <property type="evidence" value="ECO:0000314"/>
    <property type="project" value="UniProtKB"/>
</dbReference>
<dbReference type="GO" id="GO:0005739">
    <property type="term" value="C:mitochondrion"/>
    <property type="evidence" value="ECO:0000314"/>
    <property type="project" value="MGI"/>
</dbReference>
<dbReference type="GO" id="GO:0051537">
    <property type="term" value="F:2 iron, 2 sulfur cluster binding"/>
    <property type="evidence" value="ECO:0007669"/>
    <property type="project" value="Ensembl"/>
</dbReference>
<dbReference type="GO" id="GO:0008047">
    <property type="term" value="F:enzyme activator activity"/>
    <property type="evidence" value="ECO:0007669"/>
    <property type="project" value="Ensembl"/>
</dbReference>
<dbReference type="GO" id="GO:0008199">
    <property type="term" value="F:ferric iron binding"/>
    <property type="evidence" value="ECO:0007669"/>
    <property type="project" value="Ensembl"/>
</dbReference>
<dbReference type="GO" id="GO:0008198">
    <property type="term" value="F:ferrous iron binding"/>
    <property type="evidence" value="ECO:0007669"/>
    <property type="project" value="Ensembl"/>
</dbReference>
<dbReference type="GO" id="GO:0004322">
    <property type="term" value="F:ferroxidase activity"/>
    <property type="evidence" value="ECO:0007669"/>
    <property type="project" value="UniProtKB-EC"/>
</dbReference>
<dbReference type="GO" id="GO:0034986">
    <property type="term" value="F:iron chaperone activity"/>
    <property type="evidence" value="ECO:0007669"/>
    <property type="project" value="Ensembl"/>
</dbReference>
<dbReference type="GO" id="GO:0044571">
    <property type="term" value="P:[2Fe-2S] cluster assembly"/>
    <property type="evidence" value="ECO:0000250"/>
    <property type="project" value="UniProtKB"/>
</dbReference>
<dbReference type="GO" id="GO:0044572">
    <property type="term" value="P:[4Fe-4S] cluster assembly"/>
    <property type="evidence" value="ECO:0000314"/>
    <property type="project" value="UniProtKB"/>
</dbReference>
<dbReference type="GO" id="GO:0007628">
    <property type="term" value="P:adult walking behavior"/>
    <property type="evidence" value="ECO:0000315"/>
    <property type="project" value="MGI"/>
</dbReference>
<dbReference type="GO" id="GO:0009060">
    <property type="term" value="P:aerobic respiration"/>
    <property type="evidence" value="ECO:0000315"/>
    <property type="project" value="MGI"/>
</dbReference>
<dbReference type="GO" id="GO:0070301">
    <property type="term" value="P:cellular response to hydrogen peroxide"/>
    <property type="evidence" value="ECO:0007669"/>
    <property type="project" value="Ensembl"/>
</dbReference>
<dbReference type="GO" id="GO:0009792">
    <property type="term" value="P:embryo development ending in birth or egg hatching"/>
    <property type="evidence" value="ECO:0000315"/>
    <property type="project" value="MGI"/>
</dbReference>
<dbReference type="GO" id="GO:0006783">
    <property type="term" value="P:heme biosynthetic process"/>
    <property type="evidence" value="ECO:0007669"/>
    <property type="project" value="UniProtKB-KW"/>
</dbReference>
<dbReference type="GO" id="GO:0006879">
    <property type="term" value="P:intracellular iron ion homeostasis"/>
    <property type="evidence" value="ECO:0000315"/>
    <property type="project" value="MGI"/>
</dbReference>
<dbReference type="GO" id="GO:0006826">
    <property type="term" value="P:iron ion transport"/>
    <property type="evidence" value="ECO:0007669"/>
    <property type="project" value="UniProtKB-KW"/>
</dbReference>
<dbReference type="GO" id="GO:0016226">
    <property type="term" value="P:iron-sulfur cluster assembly"/>
    <property type="evidence" value="ECO:0000315"/>
    <property type="project" value="MGI"/>
</dbReference>
<dbReference type="GO" id="GO:0007005">
    <property type="term" value="P:mitochondrion organization"/>
    <property type="evidence" value="ECO:0000315"/>
    <property type="project" value="MGI"/>
</dbReference>
<dbReference type="GO" id="GO:0046716">
    <property type="term" value="P:muscle cell cellular homeostasis"/>
    <property type="evidence" value="ECO:0000315"/>
    <property type="project" value="MGI"/>
</dbReference>
<dbReference type="GO" id="GO:0040015">
    <property type="term" value="P:negative regulation of multicellular organism growth"/>
    <property type="evidence" value="ECO:0000315"/>
    <property type="project" value="MGI"/>
</dbReference>
<dbReference type="GO" id="GO:0046621">
    <property type="term" value="P:negative regulation of organ growth"/>
    <property type="evidence" value="ECO:0000315"/>
    <property type="project" value="MGI"/>
</dbReference>
<dbReference type="GO" id="GO:0090201">
    <property type="term" value="P:negative regulation of release of cytochrome c from mitochondria"/>
    <property type="evidence" value="ECO:0007669"/>
    <property type="project" value="Ensembl"/>
</dbReference>
<dbReference type="GO" id="GO:0035265">
    <property type="term" value="P:organ growth"/>
    <property type="evidence" value="ECO:0000315"/>
    <property type="project" value="MGI"/>
</dbReference>
<dbReference type="GO" id="GO:0006119">
    <property type="term" value="P:oxidative phosphorylation"/>
    <property type="evidence" value="ECO:0000315"/>
    <property type="project" value="MGI"/>
</dbReference>
<dbReference type="GO" id="GO:0008284">
    <property type="term" value="P:positive regulation of cell population proliferation"/>
    <property type="evidence" value="ECO:0007669"/>
    <property type="project" value="Ensembl"/>
</dbReference>
<dbReference type="GO" id="GO:0019230">
    <property type="term" value="P:proprioception"/>
    <property type="evidence" value="ECO:0000315"/>
    <property type="project" value="MGI"/>
</dbReference>
<dbReference type="GO" id="GO:0016540">
    <property type="term" value="P:protein autoprocessing"/>
    <property type="evidence" value="ECO:0007669"/>
    <property type="project" value="Ensembl"/>
</dbReference>
<dbReference type="GO" id="GO:0010039">
    <property type="term" value="P:response to iron ion"/>
    <property type="evidence" value="ECO:0007669"/>
    <property type="project" value="Ensembl"/>
</dbReference>
<dbReference type="CDD" id="cd00503">
    <property type="entry name" value="Frataxin"/>
    <property type="match status" value="1"/>
</dbReference>
<dbReference type="FunFam" id="3.30.920.10:FF:000002">
    <property type="entry name" value="Frataxin, mitochondrial"/>
    <property type="match status" value="1"/>
</dbReference>
<dbReference type="Gene3D" id="3.30.920.10">
    <property type="entry name" value="Frataxin/CyaY"/>
    <property type="match status" value="1"/>
</dbReference>
<dbReference type="InterPro" id="IPR017789">
    <property type="entry name" value="Frataxin"/>
</dbReference>
<dbReference type="InterPro" id="IPR002908">
    <property type="entry name" value="Frataxin/CyaY"/>
</dbReference>
<dbReference type="InterPro" id="IPR036524">
    <property type="entry name" value="Frataxin/CyaY_sf"/>
</dbReference>
<dbReference type="InterPro" id="IPR020895">
    <property type="entry name" value="Frataxin_CS"/>
</dbReference>
<dbReference type="NCBIfam" id="TIGR03421">
    <property type="entry name" value="FeS_CyaY"/>
    <property type="match status" value="1"/>
</dbReference>
<dbReference type="NCBIfam" id="TIGR03422">
    <property type="entry name" value="mito_frataxin"/>
    <property type="match status" value="1"/>
</dbReference>
<dbReference type="PANTHER" id="PTHR16821">
    <property type="entry name" value="FRATAXIN"/>
    <property type="match status" value="1"/>
</dbReference>
<dbReference type="PANTHER" id="PTHR16821:SF2">
    <property type="entry name" value="FRATAXIN, MITOCHONDRIAL"/>
    <property type="match status" value="1"/>
</dbReference>
<dbReference type="Pfam" id="PF01491">
    <property type="entry name" value="Frataxin_Cyay"/>
    <property type="match status" value="1"/>
</dbReference>
<dbReference type="PRINTS" id="PR00904">
    <property type="entry name" value="FRATAXIN"/>
</dbReference>
<dbReference type="SMART" id="SM01219">
    <property type="entry name" value="Frataxin_Cyay"/>
    <property type="match status" value="1"/>
</dbReference>
<dbReference type="SUPFAM" id="SSF55387">
    <property type="entry name" value="Frataxin/Nqo15-like"/>
    <property type="match status" value="1"/>
</dbReference>
<dbReference type="PROSITE" id="PS01344">
    <property type="entry name" value="FRATAXIN_1"/>
    <property type="match status" value="1"/>
</dbReference>
<dbReference type="PROSITE" id="PS50810">
    <property type="entry name" value="FRATAXIN_2"/>
    <property type="match status" value="1"/>
</dbReference>
<protein>
    <recommendedName>
        <fullName evidence="12">Frataxin, mitochondrial</fullName>
        <shortName>Fxn</shortName>
        <ecNumber evidence="3">1.16.3.1</ecNumber>
    </recommendedName>
    <component>
        <recommendedName>
            <fullName>Frataxin intermediate form</fullName>
        </recommendedName>
    </component>
    <component>
        <recommendedName>
            <fullName>Frataxin mature form</fullName>
        </recommendedName>
    </component>
    <component>
        <recommendedName>
            <fullName evidence="3">Extramitochondrial frataxin</fullName>
        </recommendedName>
    </component>
</protein>
<feature type="transit peptide" description="Mitochondrion" evidence="1">
    <location>
        <begin position="1"/>
        <end position="40"/>
    </location>
</feature>
<feature type="chain" id="PRO_0000010132" description="Frataxin intermediate form">
    <location>
        <begin position="41"/>
        <end position="207"/>
    </location>
</feature>
<feature type="chain" id="PRO_0000456949" description="Extramitochondrial frataxin" evidence="3">
    <location>
        <begin position="78"/>
        <end position="207"/>
    </location>
</feature>
<feature type="chain" id="PRO_0000399390" description="Frataxin mature form" evidence="1">
    <location>
        <begin position="78"/>
        <end position="207"/>
    </location>
</feature>
<proteinExistence type="evidence at protein level"/>